<reference key="1">
    <citation type="journal article" date="2015" name="Proc. Natl. Acad. Sci. U.S.A.">
        <title>Specialized insulin is used for chemical warfare by fish-hunting cone snails.</title>
        <authorList>
            <person name="Safavi-Hemami H."/>
            <person name="Gajewiak J."/>
            <person name="Karanth S."/>
            <person name="Robinson S.D."/>
            <person name="Ueberheide B."/>
            <person name="Douglass A.D."/>
            <person name="Schlegel A."/>
            <person name="Imperial J.S."/>
            <person name="Watkins M."/>
            <person name="Bandyopadhyay P.K."/>
            <person name="Yandell M."/>
            <person name="Li Q."/>
            <person name="Purcell A.W."/>
            <person name="Norton R.S."/>
            <person name="Ellgaard L."/>
            <person name="Olivera B.M."/>
        </authorList>
    </citation>
    <scope>NUCLEOTIDE SEQUENCE [MRNA]</scope>
    <scope>AMIDATION AT SER-129</scope>
    <source>
        <tissue>Venom gland</tissue>
    </source>
</reference>
<protein>
    <recommendedName>
        <fullName evidence="4">Con-Ins M1</fullName>
    </recommendedName>
    <alternativeName>
        <fullName evidence="7">Insulin 1</fullName>
    </alternativeName>
    <component>
        <recommendedName>
            <fullName evidence="4">Con-Ins M1 B chain</fullName>
        </recommendedName>
    </component>
    <component>
        <recommendedName>
            <fullName evidence="4">Con-Ins M1 A chain</fullName>
        </recommendedName>
    </component>
</protein>
<dbReference type="EMBL" id="KP268602">
    <property type="protein sequence ID" value="AJD85835.1"/>
    <property type="molecule type" value="mRNA"/>
</dbReference>
<dbReference type="GO" id="GO:0005576">
    <property type="term" value="C:extracellular region"/>
    <property type="evidence" value="ECO:0007669"/>
    <property type="project" value="UniProtKB-SubCell"/>
</dbReference>
<dbReference type="GO" id="GO:0005179">
    <property type="term" value="F:hormone activity"/>
    <property type="evidence" value="ECO:0007669"/>
    <property type="project" value="UniProtKB-KW"/>
</dbReference>
<dbReference type="GO" id="GO:0090729">
    <property type="term" value="F:toxin activity"/>
    <property type="evidence" value="ECO:0007669"/>
    <property type="project" value="UniProtKB-KW"/>
</dbReference>
<dbReference type="GO" id="GO:0006006">
    <property type="term" value="P:glucose metabolic process"/>
    <property type="evidence" value="ECO:0007669"/>
    <property type="project" value="UniProtKB-KW"/>
</dbReference>
<dbReference type="Gene3D" id="1.10.100.10">
    <property type="entry name" value="Insulin-like"/>
    <property type="match status" value="1"/>
</dbReference>
<dbReference type="InterPro" id="IPR016179">
    <property type="entry name" value="Insulin-like"/>
</dbReference>
<dbReference type="InterPro" id="IPR036438">
    <property type="entry name" value="Insulin-like_sf"/>
</dbReference>
<dbReference type="InterPro" id="IPR016724">
    <property type="entry name" value="Insulin-rel_pep"/>
</dbReference>
<dbReference type="InterPro" id="IPR022353">
    <property type="entry name" value="Insulin_CS"/>
</dbReference>
<dbReference type="Pfam" id="PF00049">
    <property type="entry name" value="Insulin"/>
    <property type="match status" value="1"/>
</dbReference>
<dbReference type="PIRSF" id="PIRSF018431">
    <property type="entry name" value="Molluscan_insulin_rel_peptide"/>
    <property type="match status" value="1"/>
</dbReference>
<dbReference type="SMART" id="SM00078">
    <property type="entry name" value="IlGF"/>
    <property type="match status" value="1"/>
</dbReference>
<dbReference type="SUPFAM" id="SSF56994">
    <property type="entry name" value="Insulin-like"/>
    <property type="match status" value="1"/>
</dbReference>
<dbReference type="PROSITE" id="PS00262">
    <property type="entry name" value="INSULIN"/>
    <property type="match status" value="1"/>
</dbReference>
<name>INS1_CONMR</name>
<accession>A0A0B5A8Q6</accession>
<organism>
    <name type="scientific">Conus marmoreus</name>
    <name type="common">Marble cone</name>
    <dbReference type="NCBI Taxonomy" id="42752"/>
    <lineage>
        <taxon>Eukaryota</taxon>
        <taxon>Metazoa</taxon>
        <taxon>Spiralia</taxon>
        <taxon>Lophotrochozoa</taxon>
        <taxon>Mollusca</taxon>
        <taxon>Gastropoda</taxon>
        <taxon>Caenogastropoda</taxon>
        <taxon>Neogastropoda</taxon>
        <taxon>Conoidea</taxon>
        <taxon>Conidae</taxon>
        <taxon>Conus</taxon>
    </lineage>
</organism>
<keyword id="KW-0027">Amidation</keyword>
<keyword id="KW-0119">Carbohydrate metabolism</keyword>
<keyword id="KW-0165">Cleavage on pair of basic residues</keyword>
<keyword id="KW-1015">Disulfide bond</keyword>
<keyword id="KW-0301">Gamma-carboxyglutamic acid</keyword>
<keyword id="KW-0313">Glucose metabolism</keyword>
<keyword id="KW-0372">Hormone</keyword>
<keyword id="KW-0379">Hydroxylation</keyword>
<keyword id="KW-0964">Secreted</keyword>
<keyword id="KW-0732">Signal</keyword>
<keyword id="KW-0800">Toxin</keyword>
<proteinExistence type="evidence at protein level"/>
<sequence length="130" mass="14223">MTTSSYFLLVALGLLLYVCQSSFGGEHVCGSNQPNHPNGKCGSKMADYLEEQCEEEEAAHGGTNDARATTGRALSLSKRRGFLSMLKRRGKRNEASPLQRAGRGIVCECCKNHCTDEEFTEYCPHVTESG</sequence>
<feature type="signal peptide" evidence="3">
    <location>
        <begin position="1"/>
        <end position="21"/>
    </location>
</feature>
<feature type="peptide" id="PRO_5002112026" description="Con-Ins M1 B chain" evidence="1">
    <location>
        <begin position="22"/>
        <end position="58"/>
    </location>
</feature>
<feature type="propeptide" id="PRO_0000439320" description="C peptide" evidence="1">
    <location>
        <begin position="59"/>
        <end position="92"/>
    </location>
</feature>
<feature type="peptide" id="PRO_0000439321" description="Con-Ins M1 A chain" evidence="1">
    <location>
        <begin position="93"/>
        <end position="129"/>
    </location>
</feature>
<feature type="modified residue" description="4-hydroxyproline; partial" evidence="2">
    <location>
        <position position="34"/>
    </location>
</feature>
<feature type="modified residue" description="4-carboxyglutamate; partial" evidence="2">
    <location>
        <position position="118"/>
    </location>
</feature>
<feature type="modified residue" description="Serine amide" evidence="6">
    <location>
        <position position="129"/>
    </location>
</feature>
<feature type="disulfide bond" evidence="5">
    <location>
        <begin position="29"/>
        <end position="107"/>
    </location>
</feature>
<feature type="disulfide bond" description="Interchain (between B and A chains)" evidence="2">
    <location>
        <begin position="41"/>
        <end position="110"/>
    </location>
</feature>
<feature type="disulfide bond" description="Interchain (between B and A chains)" evidence="2">
    <location>
        <begin position="53"/>
        <end position="123"/>
    </location>
</feature>
<feature type="disulfide bond" evidence="2">
    <location>
        <begin position="109"/>
        <end position="114"/>
    </location>
</feature>
<comment type="function">
    <text evidence="2">This venom insulin facilitates prey capture by rapidly inducing hypoglycemic shock. Intraperitoneal injection of this peptide into zebrafish lowers blood glucose with the same potency than human insulin. In vivo, when applied to water, this peptide reduces overall locomotor activity of zebrafish larvae, observed as a significant decrease in the percentage of time spent swimming and movement frequency.</text>
</comment>
<comment type="subunit">
    <text evidence="2">Heterodimer of A and B chains; disulfide-linked.</text>
</comment>
<comment type="subcellular location">
    <subcellularLocation>
        <location evidence="2">Secreted</location>
    </subcellularLocation>
</comment>
<comment type="tissue specificity">
    <text evidence="6">Expressed by the venom gland.</text>
</comment>
<comment type="similarity">
    <text>Belongs to the insulin family.</text>
</comment>
<evidence type="ECO:0000250" key="1">
    <source>
        <dbReference type="UniProtKB" id="A0A0B5ABD9"/>
    </source>
</evidence>
<evidence type="ECO:0000250" key="2">
    <source>
        <dbReference type="UniProtKB" id="A0A0B5AC95"/>
    </source>
</evidence>
<evidence type="ECO:0000255" key="3"/>
<evidence type="ECO:0000303" key="4">
    <source>
    </source>
</evidence>
<evidence type="ECO:0000305" key="5"/>
<evidence type="ECO:0000305" key="6">
    <source>
    </source>
</evidence>
<evidence type="ECO:0000312" key="7">
    <source>
        <dbReference type="EMBL" id="AJD85835.1"/>
    </source>
</evidence>